<feature type="chain" id="PRO_0000408061" description="Putative antitoxin VapB14">
    <location>
        <begin position="1"/>
        <end position="71"/>
    </location>
</feature>
<evidence type="ECO:0000305" key="1">
    <source>
    </source>
</evidence>
<proteinExistence type="predicted"/>
<gene>
    <name type="primary">vapB14</name>
    <name type="ordered locus">Rv1952</name>
</gene>
<name>VPB14_MYCTU</name>
<organism>
    <name type="scientific">Mycobacterium tuberculosis (strain ATCC 25618 / H37Rv)</name>
    <dbReference type="NCBI Taxonomy" id="83332"/>
    <lineage>
        <taxon>Bacteria</taxon>
        <taxon>Bacillati</taxon>
        <taxon>Actinomycetota</taxon>
        <taxon>Actinomycetes</taxon>
        <taxon>Mycobacteriales</taxon>
        <taxon>Mycobacteriaceae</taxon>
        <taxon>Mycobacterium</taxon>
        <taxon>Mycobacterium tuberculosis complex</taxon>
    </lineage>
</organism>
<comment type="function">
    <text evidence="1">Putative antitoxin component of a possible type II toxin-antitoxin (TA) system. The cognate toxin is VapB14.</text>
</comment>
<keyword id="KW-1185">Reference proteome</keyword>
<keyword id="KW-1277">Toxin-antitoxin system</keyword>
<dbReference type="EMBL" id="AL123456">
    <property type="protein sequence ID" value="CCP44719.1"/>
    <property type="molecule type" value="Genomic_DNA"/>
</dbReference>
<dbReference type="PIR" id="D70638">
    <property type="entry name" value="D70638"/>
</dbReference>
<dbReference type="RefSeq" id="NP_216468.1">
    <property type="nucleotide sequence ID" value="NC_000962.3"/>
</dbReference>
<dbReference type="RefSeq" id="WP_003409878.1">
    <property type="nucleotide sequence ID" value="NZ_NVQJ01000048.1"/>
</dbReference>
<dbReference type="SMR" id="P95262"/>
<dbReference type="STRING" id="83332.Rv1952"/>
<dbReference type="PaxDb" id="83332-Rv1952"/>
<dbReference type="DNASU" id="885971"/>
<dbReference type="GeneID" id="885971"/>
<dbReference type="KEGG" id="mtu:Rv1952"/>
<dbReference type="KEGG" id="mtv:RVBD_1952"/>
<dbReference type="PATRIC" id="fig|83332.111.peg.2171"/>
<dbReference type="TubercuList" id="Rv1952"/>
<dbReference type="eggNOG" id="COG4691">
    <property type="taxonomic scope" value="Bacteria"/>
</dbReference>
<dbReference type="InParanoid" id="P95262"/>
<dbReference type="OrthoDB" id="2389872at2"/>
<dbReference type="Proteomes" id="UP000001584">
    <property type="component" value="Chromosome"/>
</dbReference>
<dbReference type="GO" id="GO:0006355">
    <property type="term" value="P:regulation of DNA-templated transcription"/>
    <property type="evidence" value="ECO:0007669"/>
    <property type="project" value="InterPro"/>
</dbReference>
<dbReference type="Gene3D" id="1.10.1220.10">
    <property type="entry name" value="Met repressor-like"/>
    <property type="match status" value="1"/>
</dbReference>
<dbReference type="InterPro" id="IPR013321">
    <property type="entry name" value="Arc_rbn_hlx_hlx"/>
</dbReference>
<dbReference type="InterPro" id="IPR053853">
    <property type="entry name" value="FitA-like_RHH"/>
</dbReference>
<dbReference type="InterPro" id="IPR010985">
    <property type="entry name" value="Ribbon_hlx_hlx"/>
</dbReference>
<dbReference type="Pfam" id="PF22513">
    <property type="entry name" value="FitA-like_RHH"/>
    <property type="match status" value="1"/>
</dbReference>
<dbReference type="SUPFAM" id="SSF47598">
    <property type="entry name" value="Ribbon-helix-helix"/>
    <property type="match status" value="1"/>
</dbReference>
<protein>
    <recommendedName>
        <fullName>Putative antitoxin VapB14</fullName>
    </recommendedName>
</protein>
<reference key="1">
    <citation type="journal article" date="1998" name="Nature">
        <title>Deciphering the biology of Mycobacterium tuberculosis from the complete genome sequence.</title>
        <authorList>
            <person name="Cole S.T."/>
            <person name="Brosch R."/>
            <person name="Parkhill J."/>
            <person name="Garnier T."/>
            <person name="Churcher C.M."/>
            <person name="Harris D.E."/>
            <person name="Gordon S.V."/>
            <person name="Eiglmeier K."/>
            <person name="Gas S."/>
            <person name="Barry C.E. III"/>
            <person name="Tekaia F."/>
            <person name="Badcock K."/>
            <person name="Basham D."/>
            <person name="Brown D."/>
            <person name="Chillingworth T."/>
            <person name="Connor R."/>
            <person name="Davies R.M."/>
            <person name="Devlin K."/>
            <person name="Feltwell T."/>
            <person name="Gentles S."/>
            <person name="Hamlin N."/>
            <person name="Holroyd S."/>
            <person name="Hornsby T."/>
            <person name="Jagels K."/>
            <person name="Krogh A."/>
            <person name="McLean J."/>
            <person name="Moule S."/>
            <person name="Murphy L.D."/>
            <person name="Oliver S."/>
            <person name="Osborne J."/>
            <person name="Quail M.A."/>
            <person name="Rajandream M.A."/>
            <person name="Rogers J."/>
            <person name="Rutter S."/>
            <person name="Seeger K."/>
            <person name="Skelton S."/>
            <person name="Squares S."/>
            <person name="Squares R."/>
            <person name="Sulston J.E."/>
            <person name="Taylor K."/>
            <person name="Whitehead S."/>
            <person name="Barrell B.G."/>
        </authorList>
    </citation>
    <scope>NUCLEOTIDE SEQUENCE [LARGE SCALE GENOMIC DNA]</scope>
    <source>
        <strain>ATCC 25618 / H37Rv</strain>
    </source>
</reference>
<reference key="2">
    <citation type="journal article" date="2005" name="Nucleic Acids Res.">
        <title>Toxin-antitoxin loci are highly abundant in free-living but lost from host-associated prokaryotes.</title>
        <authorList>
            <person name="Pandey D.P."/>
            <person name="Gerdes K."/>
        </authorList>
    </citation>
    <scope>POSSIBLE FUNCTION</scope>
    <source>
        <strain>ATCC 25618 / H37Rv</strain>
    </source>
</reference>
<sequence length="71" mass="7700">MIRNLPEGTKAALRVRAARHHHSVEAEARAILTAGLLGEEVPMPVLLAADSGHDIDFEPERLGLIARTPQL</sequence>
<accession>P95262</accession>
<accession>L0TB24</accession>